<name>NS2_AADNV</name>
<protein>
    <recommendedName>
        <fullName>Non-structural protein NS2</fullName>
    </recommendedName>
    <alternativeName>
        <fullName>Non-capsid protein NS-2</fullName>
        <shortName>NCVP2</shortName>
    </alternativeName>
</protein>
<evidence type="ECO:0000256" key="1">
    <source>
        <dbReference type="SAM" id="MobiDB-lite"/>
    </source>
</evidence>
<gene>
    <name type="primary">NS</name>
</gene>
<sequence>SVSAFFVGSMTHSVNPGGENWIWESQLEVREEWPTITNNQGTKIYIAPRQYLLQLRCKQTPSRSEISEKISQIKPLITSTHNYTAAPEPLNSLNSHFQLLEQEAGKYLYVNLTNISSQIIRKKIFNHILDVFEDSYSPKKLWIITGHRQAQPKCYETTSKDAVLKALLTAQAKITEMELMGRASPPWIYKATVLLTHMAMNRQQAVRPERYEQQPRQNQVNQKNIKAAIINKIYKNKAVPPPSPTDTISSTESWMEEVNQIEKQHTTHSSSTKITAKRTGDISPQQGPSKRRALSPLITETTSTSSSHHQTQEETAQESEPESPSFLVQQAQEMQKRLSLFPKLNFSGTTFSIASVTVSKQSISMEIKSNNN</sequence>
<dbReference type="EMBL" id="X74945">
    <property type="protein sequence ID" value="CAA52900.1"/>
    <property type="molecule type" value="Genomic_DNA"/>
</dbReference>
<dbReference type="KEGG" id="vg:955417"/>
<dbReference type="Proteomes" id="UP000008472">
    <property type="component" value="Segment"/>
</dbReference>
<accession>Q90186</accession>
<organismHost>
    <name type="scientific">Aedes albopictus</name>
    <name type="common">Asian tiger mosquito</name>
    <name type="synonym">Stegomyia albopicta</name>
    <dbReference type="NCBI Taxonomy" id="7160"/>
</organismHost>
<reference key="1">
    <citation type="journal article" date="1994" name="Virology">
        <title>Complete nucleotide sequence and genomic organization of the Aedes albopictus parvovirus (AaPV) pathogenic for Aedes aegypti larvae.</title>
        <authorList>
            <person name="Boublik Y."/>
            <person name="Jousset F.X."/>
            <person name="Bergoin M."/>
        </authorList>
    </citation>
    <scope>NUCLEOTIDE SEQUENCE [GENOMIC DNA]</scope>
</reference>
<feature type="chain" id="PRO_0000403667" description="Non-structural protein NS2">
    <location>
        <begin position="1"/>
        <end position="372"/>
    </location>
</feature>
<feature type="region of interest" description="Disordered" evidence="1">
    <location>
        <begin position="259"/>
        <end position="326"/>
    </location>
</feature>
<feature type="compositionally biased region" description="Low complexity" evidence="1">
    <location>
        <begin position="299"/>
        <end position="309"/>
    </location>
</feature>
<proteinExistence type="predicted"/>
<keyword id="KW-1185">Reference proteome</keyword>
<organism>
    <name type="scientific">Aedes albopictus densovirus (isolate Boublik/1994)</name>
    <name type="common">AalDNV</name>
    <dbReference type="NCBI Taxonomy" id="648330"/>
    <lineage>
        <taxon>Viruses</taxon>
        <taxon>Monodnaviria</taxon>
        <taxon>Shotokuvirae</taxon>
        <taxon>Cossaviricota</taxon>
        <taxon>Quintoviricetes</taxon>
        <taxon>Piccovirales</taxon>
        <taxon>Parvoviridae</taxon>
        <taxon>Hamaparvovirinae</taxon>
        <taxon>Brevihamaparvovirus</taxon>
        <taxon>Brevihamaparvovirus dipteran1</taxon>
    </lineage>
</organism>